<evidence type="ECO:0000250" key="1"/>
<evidence type="ECO:0000250" key="2">
    <source>
        <dbReference type="UniProtKB" id="P24821"/>
    </source>
</evidence>
<evidence type="ECO:0000255" key="3"/>
<evidence type="ECO:0000255" key="4">
    <source>
        <dbReference type="PROSITE-ProRule" id="PRU00076"/>
    </source>
</evidence>
<evidence type="ECO:0000255" key="5">
    <source>
        <dbReference type="PROSITE-ProRule" id="PRU00316"/>
    </source>
</evidence>
<evidence type="ECO:0000255" key="6">
    <source>
        <dbReference type="PROSITE-ProRule" id="PRU00739"/>
    </source>
</evidence>
<evidence type="ECO:0000269" key="7">
    <source>
    </source>
</evidence>
<evidence type="ECO:0000269" key="8">
    <source>
    </source>
</evidence>
<evidence type="ECO:0000269" key="9">
    <source>
    </source>
</evidence>
<evidence type="ECO:0000303" key="10">
    <source>
    </source>
</evidence>
<evidence type="ECO:0000305" key="11"/>
<evidence type="ECO:0007829" key="12">
    <source>
        <dbReference type="PDB" id="1QR4"/>
    </source>
</evidence>
<reference key="1">
    <citation type="journal article" date="1989" name="Cell">
        <title>Two contrary functions of tenascin: dissection of the active sites by recombinant tenascin fragments.</title>
        <authorList>
            <person name="Spring J."/>
            <person name="Beck K."/>
            <person name="Chiquet-Ehrismann R."/>
        </authorList>
    </citation>
    <scope>NUCLEOTIDE SEQUENCE [MRNA] (ISOFORMS 1; 2 AND 3)</scope>
    <source>
        <tissue>Embryo</tissue>
    </source>
</reference>
<reference key="2">
    <citation type="journal article" date="1988" name="EMBO J.">
        <title>Tenascin: cDNA cloning and induction by TGF-beta.</title>
        <authorList>
            <person name="Pearson C.A."/>
            <person name="Pearson D."/>
            <person name="Shibahara S."/>
            <person name="Hofsteenge J."/>
            <person name="Chiquet-Ehrismann R."/>
        </authorList>
    </citation>
    <scope>NUCLEOTIDE SEQUENCE [MRNA] OF 27-722 (ISOFORMS 1/2/3)</scope>
    <scope>PROTEIN SEQUENCE OF 79-96</scope>
    <scope>INDUCTION BY TGFB1</scope>
    <source>
        <tissue>Fibroblast</tissue>
    </source>
</reference>
<reference key="3">
    <citation type="journal article" date="1988" name="Proc. Natl. Acad. Sci. U.S.A.">
        <title>A cDNA clone for cytotactin contains sequences similar to epidermal growth factor-like repeats and segments of fibronectin and fibrinogen.</title>
        <authorList>
            <person name="Jones F.S."/>
            <person name="Burgoon M.P."/>
            <person name="Hoffman S."/>
            <person name="Crossin K.L."/>
            <person name="Cunningham B.A."/>
            <person name="Edelman G.M."/>
        </authorList>
    </citation>
    <scope>NUCLEOTIDE SEQUENCE [MRNA] OF 464-1018 AND 1412-1661 (ISOFORMS 1/2/3)</scope>
    <scope>PROTEIN SEQUENCE OF 852-868</scope>
    <source>
        <tissue>Embryo</tissue>
    </source>
</reference>
<reference key="4">
    <citation type="journal article" date="1997" name="J. Cell Biol.">
        <title>Chicken acidic leucine-rich EGF-like domain containing brain protein (CALEB), a neural member of the EGF family of differentiation factors, is implicated in neurite formation.</title>
        <authorList>
            <person name="Schumacher S."/>
            <person name="Volkmer H."/>
            <person name="Buck F."/>
            <person name="Otto A."/>
            <person name="Tarnok A."/>
            <person name="Roth S."/>
            <person name="Rathjen F.G."/>
        </authorList>
    </citation>
    <scope>INTERACTION WITH CSPG5</scope>
    <scope>TISSUE SPECIFICITY</scope>
</reference>
<reference key="5">
    <citation type="journal article" date="2001" name="J. Biol. Chem.">
        <title>CALEB binds via its acidic stretch to the fibrinogen-like domain of tenascin-C or tenascin-R and its expression is dynamically regulated after optic nerve lesion.</title>
        <authorList>
            <person name="Schumacher S."/>
            <person name="Jung M."/>
            <person name="Noerenberg U."/>
            <person name="Dorner A."/>
            <person name="Chiquet-Ehrismann R."/>
            <person name="Stuermer C.A.O."/>
            <person name="Rathjen F.G."/>
        </authorList>
    </citation>
    <scope>INTERACTION WITH CSPG5</scope>
    <scope>TISSUE SPECIFICITY</scope>
    <scope>DOMAIN</scope>
</reference>
<dbReference type="EMBL" id="M23121">
    <property type="protein sequence ID" value="AAA49086.1"/>
    <property type="molecule type" value="mRNA"/>
</dbReference>
<dbReference type="EMBL" id="X08031">
    <property type="protein sequence ID" value="CAB40811.1"/>
    <property type="molecule type" value="mRNA"/>
</dbReference>
<dbReference type="EMBL" id="X08030">
    <property type="protein sequence ID" value="CAA30824.1"/>
    <property type="status" value="ALT_TERM"/>
    <property type="molecule type" value="mRNA"/>
</dbReference>
<dbReference type="EMBL" id="J03641">
    <property type="protein sequence ID" value="AAA48748.1"/>
    <property type="status" value="ALT_SEQ"/>
    <property type="molecule type" value="mRNA"/>
</dbReference>
<dbReference type="EMBL" id="M20816">
    <property type="protein sequence ID" value="AAA48749.1"/>
    <property type="status" value="ALT_SEQ"/>
    <property type="molecule type" value="mRNA"/>
</dbReference>
<dbReference type="PIR" id="A31930">
    <property type="entry name" value="A31930"/>
</dbReference>
<dbReference type="PDB" id="1QR4">
    <property type="method" value="X-ray"/>
    <property type="resolution" value="2.55 A"/>
    <property type="chains" value="A/B=950-1042, A/B=1316-1408"/>
</dbReference>
<dbReference type="PDBsum" id="1QR4"/>
<dbReference type="SMR" id="P10039"/>
<dbReference type="ComplexPortal" id="CPX-7404">
    <property type="entry name" value="Tenascin-C complex"/>
</dbReference>
<dbReference type="FunCoup" id="P10039">
    <property type="interactions" value="858"/>
</dbReference>
<dbReference type="IntAct" id="P10039">
    <property type="interactions" value="1"/>
</dbReference>
<dbReference type="STRING" id="9031.ENSGALP00000058289"/>
<dbReference type="GlyCosmos" id="P10039">
    <property type="glycosylation" value="17 sites, No reported glycans"/>
</dbReference>
<dbReference type="GlyGen" id="P10039">
    <property type="glycosylation" value="18 sites"/>
</dbReference>
<dbReference type="PaxDb" id="9031-ENSGALP00000011509"/>
<dbReference type="VEuPathDB" id="HostDB:geneid_396440"/>
<dbReference type="eggNOG" id="KOG1225">
    <property type="taxonomic scope" value="Eukaryota"/>
</dbReference>
<dbReference type="eggNOG" id="KOG2579">
    <property type="taxonomic scope" value="Eukaryota"/>
</dbReference>
<dbReference type="InParanoid" id="P10039"/>
<dbReference type="OrthoDB" id="6130531at2759"/>
<dbReference type="EvolutionaryTrace" id="P10039"/>
<dbReference type="Proteomes" id="UP000000539">
    <property type="component" value="Unassembled WGS sequence"/>
</dbReference>
<dbReference type="GO" id="GO:0062023">
    <property type="term" value="C:collagen-containing extracellular matrix"/>
    <property type="evidence" value="ECO:0000318"/>
    <property type="project" value="GO_Central"/>
</dbReference>
<dbReference type="GO" id="GO:0005615">
    <property type="term" value="C:extracellular space"/>
    <property type="evidence" value="ECO:0000318"/>
    <property type="project" value="GO_Central"/>
</dbReference>
<dbReference type="GO" id="GO:0007155">
    <property type="term" value="P:cell adhesion"/>
    <property type="evidence" value="ECO:0007669"/>
    <property type="project" value="UniProtKB-KW"/>
</dbReference>
<dbReference type="GO" id="GO:0030155">
    <property type="term" value="P:regulation of cell adhesion"/>
    <property type="evidence" value="ECO:0000318"/>
    <property type="project" value="GO_Central"/>
</dbReference>
<dbReference type="CDD" id="cd00054">
    <property type="entry name" value="EGF_CA"/>
    <property type="match status" value="5"/>
</dbReference>
<dbReference type="CDD" id="cd00063">
    <property type="entry name" value="FN3"/>
    <property type="match status" value="11"/>
</dbReference>
<dbReference type="CDD" id="cd00087">
    <property type="entry name" value="FReD"/>
    <property type="match status" value="1"/>
</dbReference>
<dbReference type="FunFam" id="2.60.40.10:FF:000099">
    <property type="entry name" value="Fibronectin 1"/>
    <property type="match status" value="1"/>
</dbReference>
<dbReference type="FunFam" id="2.10.25.10:FF:000001">
    <property type="entry name" value="Tenascin C"/>
    <property type="match status" value="13"/>
</dbReference>
<dbReference type="FunFam" id="2.20.25.10:FF:000006">
    <property type="entry name" value="Tenascin C"/>
    <property type="match status" value="1"/>
</dbReference>
<dbReference type="FunFam" id="2.60.40.10:FF:000162">
    <property type="entry name" value="Tenascin C"/>
    <property type="match status" value="1"/>
</dbReference>
<dbReference type="FunFam" id="2.60.40.10:FF:000201">
    <property type="entry name" value="Tenascin C"/>
    <property type="match status" value="1"/>
</dbReference>
<dbReference type="FunFam" id="2.60.40.10:FF:000207">
    <property type="entry name" value="Tenascin C"/>
    <property type="match status" value="1"/>
</dbReference>
<dbReference type="FunFam" id="2.60.40.10:FF:000274">
    <property type="entry name" value="Tenascin C"/>
    <property type="match status" value="1"/>
</dbReference>
<dbReference type="FunFam" id="2.60.40.10:FF:000293">
    <property type="entry name" value="Tenascin C"/>
    <property type="match status" value="1"/>
</dbReference>
<dbReference type="FunFam" id="2.60.40.10:FF:000398">
    <property type="entry name" value="Tenascin C"/>
    <property type="match status" value="1"/>
</dbReference>
<dbReference type="FunFam" id="2.60.40.10:FF:000529">
    <property type="entry name" value="Tenascin C"/>
    <property type="match status" value="1"/>
</dbReference>
<dbReference type="FunFam" id="2.60.40.10:FF:000611">
    <property type="entry name" value="Tenascin C"/>
    <property type="match status" value="1"/>
</dbReference>
<dbReference type="FunFam" id="3.90.215.10:FF:000001">
    <property type="entry name" value="Tenascin isoform 1"/>
    <property type="match status" value="1"/>
</dbReference>
<dbReference type="Gene3D" id="2.20.25.10">
    <property type="match status" value="1"/>
</dbReference>
<dbReference type="Gene3D" id="3.90.215.10">
    <property type="entry name" value="Gamma Fibrinogen, chain A, domain 1"/>
    <property type="match status" value="1"/>
</dbReference>
<dbReference type="Gene3D" id="2.60.40.10">
    <property type="entry name" value="Immunoglobulins"/>
    <property type="match status" value="11"/>
</dbReference>
<dbReference type="Gene3D" id="2.10.25.10">
    <property type="entry name" value="Laminin"/>
    <property type="match status" value="13"/>
</dbReference>
<dbReference type="InterPro" id="IPR050991">
    <property type="entry name" value="ECM_Regulatory_Proteins"/>
</dbReference>
<dbReference type="InterPro" id="IPR000742">
    <property type="entry name" value="EGF-like_dom"/>
</dbReference>
<dbReference type="InterPro" id="IPR041161">
    <property type="entry name" value="EGF_Tenascin"/>
</dbReference>
<dbReference type="InterPro" id="IPR036056">
    <property type="entry name" value="Fibrinogen-like_C"/>
</dbReference>
<dbReference type="InterPro" id="IPR014716">
    <property type="entry name" value="Fibrinogen_a/b/g_C_1"/>
</dbReference>
<dbReference type="InterPro" id="IPR002181">
    <property type="entry name" value="Fibrinogen_a/b/g_C_dom"/>
</dbReference>
<dbReference type="InterPro" id="IPR003961">
    <property type="entry name" value="FN3_dom"/>
</dbReference>
<dbReference type="InterPro" id="IPR036116">
    <property type="entry name" value="FN3_sf"/>
</dbReference>
<dbReference type="InterPro" id="IPR013783">
    <property type="entry name" value="Ig-like_fold"/>
</dbReference>
<dbReference type="NCBIfam" id="NF040941">
    <property type="entry name" value="GGGWT_bact"/>
    <property type="match status" value="1"/>
</dbReference>
<dbReference type="PANTHER" id="PTHR46708">
    <property type="entry name" value="TENASCIN"/>
    <property type="match status" value="1"/>
</dbReference>
<dbReference type="PANTHER" id="PTHR46708:SF1">
    <property type="entry name" value="TENASCIN"/>
    <property type="match status" value="1"/>
</dbReference>
<dbReference type="Pfam" id="PF25024">
    <property type="entry name" value="EGF_TEN"/>
    <property type="match status" value="1"/>
</dbReference>
<dbReference type="Pfam" id="PF18720">
    <property type="entry name" value="EGF_Tenascin"/>
    <property type="match status" value="1"/>
</dbReference>
<dbReference type="Pfam" id="PF23106">
    <property type="entry name" value="EGF_Teneurin"/>
    <property type="match status" value="6"/>
</dbReference>
<dbReference type="Pfam" id="PF00147">
    <property type="entry name" value="Fibrinogen_C"/>
    <property type="match status" value="1"/>
</dbReference>
<dbReference type="Pfam" id="PF00041">
    <property type="entry name" value="fn3"/>
    <property type="match status" value="11"/>
</dbReference>
<dbReference type="SMART" id="SM00181">
    <property type="entry name" value="EGF"/>
    <property type="match status" value="13"/>
</dbReference>
<dbReference type="SMART" id="SM00186">
    <property type="entry name" value="FBG"/>
    <property type="match status" value="1"/>
</dbReference>
<dbReference type="SMART" id="SM00060">
    <property type="entry name" value="FN3"/>
    <property type="match status" value="11"/>
</dbReference>
<dbReference type="SUPFAM" id="SSF56496">
    <property type="entry name" value="Fibrinogen C-terminal domain-like"/>
    <property type="match status" value="1"/>
</dbReference>
<dbReference type="SUPFAM" id="SSF49265">
    <property type="entry name" value="Fibronectin type III"/>
    <property type="match status" value="8"/>
</dbReference>
<dbReference type="PROSITE" id="PS00022">
    <property type="entry name" value="EGF_1"/>
    <property type="match status" value="14"/>
</dbReference>
<dbReference type="PROSITE" id="PS01186">
    <property type="entry name" value="EGF_2"/>
    <property type="match status" value="14"/>
</dbReference>
<dbReference type="PROSITE" id="PS50026">
    <property type="entry name" value="EGF_3"/>
    <property type="match status" value="5"/>
</dbReference>
<dbReference type="PROSITE" id="PS51406">
    <property type="entry name" value="FIBRINOGEN_C_2"/>
    <property type="match status" value="1"/>
</dbReference>
<dbReference type="PROSITE" id="PS50853">
    <property type="entry name" value="FN3"/>
    <property type="match status" value="11"/>
</dbReference>
<comment type="function">
    <text>Extracellular matrix protein implicated in guidance of migrating neurons as well as axons during development, synaptic plasticity as well as neuronal regeneration. Ligand for integrins alpha-8/beta-1, alpha-9/beta-1, alpha-V/beta-3 and alpha-V/beta-6.</text>
</comment>
<comment type="subunit">
    <text evidence="7 9">Homohexamer; disulfide-linked. A homotrimer may be formed in the triple coiled-coil region and may be stabilized by disulfide rings at both ends. Two of such half-hexabrachions may be disulfide linked within the central globule. Interacts with CSPG5 (PubMed:11069908, PubMed:9049254).</text>
</comment>
<comment type="subcellular location">
    <subcellularLocation>
        <location>Secreted</location>
        <location>Extracellular space</location>
        <location>Extracellular matrix</location>
    </subcellularLocation>
</comment>
<comment type="alternative products">
    <event type="alternative splicing"/>
    <isoform>
        <id>P10039-1</id>
        <name>1</name>
        <name>230 kDa</name>
        <sequence type="displayed"/>
    </isoform>
    <isoform>
        <id>P10039-2</id>
        <name>2</name>
        <name>200 kDa</name>
        <sequence type="described" ref="VSP_001410"/>
    </isoform>
    <isoform>
        <id>P10039-3</id>
        <name>3</name>
        <name>190 kDa</name>
        <sequence type="described" ref="VSP_001411"/>
    </isoform>
    <text>Isoforms are produced in a tissue- and time-specific manner during development.</text>
</comment>
<comment type="tissue specificity">
    <text evidence="7 9">Expressed in the brain.</text>
</comment>
<comment type="induction">
    <text evidence="8">Induced by TGFB1 in embryonic fibroblasts, in vitro.</text>
</comment>
<comment type="domain">
    <text evidence="7">The fibrinogen C-terminal domain mediates interaction with CSPG5.</text>
</comment>
<comment type="similarity">
    <text evidence="11">Belongs to the tenascin family.</text>
</comment>
<protein>
    <recommendedName>
        <fullName>Tenascin</fullName>
        <shortName>TN</shortName>
    </recommendedName>
    <alternativeName>
        <fullName>Cytotactin</fullName>
    </alternativeName>
    <alternativeName>
        <fullName>GMEM</fullName>
    </alternativeName>
    <alternativeName>
        <fullName>GP 150-225</fullName>
    </alternativeName>
    <alternativeName>
        <fullName>Glioma-associated-extracellular matrix antigen</fullName>
    </alternativeName>
    <alternativeName>
        <fullName>Hexabrachion</fullName>
    </alternativeName>
    <alternativeName>
        <fullName>JI</fullName>
    </alternativeName>
    <alternativeName>
        <fullName>Myotendinous antigen</fullName>
    </alternativeName>
    <alternativeName>
        <fullName>Neuronectin</fullName>
    </alternativeName>
    <alternativeName>
        <fullName>Tenascin-C</fullName>
        <shortName>TN-C</shortName>
    </alternativeName>
</protein>
<sequence>MGLPSQVLACAILGLLYQHASGGLIKRIIRQKRETGLNVTLPEDNQPVVFNHVYNIKLPVGSLCSVDLDTASGDADLKAEIEPVKNYEEHTVNEGNQIVFTHRINIPRRACGCAAAPDIKDLLSRLEELEGLVSSLREQCASGAGCCPNSQTAEGRLDTAPYCSGHGNYSTEICGCVCEPGWKGPNCSEPACPRNCLNRGLCVRGKCICEEGFTGEDCSQAACPSDCNDQGKCVDGVCVCFEGYTGPDCGEELCPHGCGIHGRCVGGRCVCHEGFTGEDCNEPLCPNNCHNRGRCVDNECVCDEGYTGEDCGELICPNDCFDRGRCINGTCFCEEGYTGEDCGELTCPNNCNGNGRCENGLCVCHEGFVGDDCSQKRCPKDCNNRGHCVDGRCVCHEGYLGEDCGELRCPNDCHNRGRCINGQCVCDEGFIGEDCGELRCPNDCHNRGRCVNGQCECHEGFIGEDCGELRCPNDCNSHGRCVNGQCVCDEGYTGEDCGELRCPNDCHNRGRCVEGRCVCDNGFMGEDCGELSCPNDCHQHGRCVDGRCVCHEGFTGEDCRERSCPNDCNNVGRCVEGRCVCEEGYMGIDCSDVSPPTELTVTNVTDKTVNLEWKHENLVNEYLVTYVPTSSGGLDLQFTVPGNQTSATIHELEPGVEYFIRVFAILKNKKSIPVSARVATYLPAPEGLKFKSVRETSVQVEWDPLSISFDGWELVFRNMQKKDDNGDITSSLKRPETSYMQPGLAPGQQYNVSLHIVKNNTRGPGLSRVITTKLDAPSQIEAKDVTDTTALITWSKPLAEIEGIELTYGPKDVPGDRTTIDLSEDENQYSIGNLRPHTEYEVTLISRRGDMESDPAKEVFVTDLDAPRNLKRVSQTDNSITLEWKNSHANIDNYRIKFAPISGGDHTELTVPKGNQATTRATLTGLRPGTEYGIGVTAVRQDRESAPATINAGTDLDNPKDLEVSDPTETTLSLRWRRPVAKFDRYRLTYVSPSGKKNEMEIPVDSTSFILRGLDAGTEYTISLVAEKGRHKSKPTTIKGSTEEEPELGNLSVSETGWDGFQLTWTAADGAYENFVIQVQQSDNPEETWNITVPGGQHSVNVTGLKANTPYNVTLYGVIRGYRTKPLYVETTTGAHPEVGELTVSDITPESFNLSWTTTNGDFDAFTIEIIDSNRLLEPMEFNISGNSRTAHISGLSPSTDFIVYLYGISHGFRTQAISAAATTEAEPEVDNLLVSDATPDGFRLSWTADDGVFDSFVLKIRDTKRKSDPLELIVPGHERTHDITGLKEGTEYEIELYGVSSGRRSQPINSVATTVVGSPKGISFSDITENSATVSWTPPRSRVDSYRVSYVPITGGTPNVVTVDGSKTRTKLVKLVPGVDYNVNIISVKGFEESEPISGILKTALDSPSGLVVMNITDSEALATWQPAIAAVDNYIVSYSSEDEPEVTQMVSGNTVEYDLNGLRPATEYTLRVHAVKDAQKSETLSTQFTTGLDAPKDLSATEVQSETAVITWRPPRAPVTDYLLTYESIDGRVKEVILDPETTSYTLTELSPSTQYTVKLQALSRSMRSKMIQTVFTTTGLLYPYPKDCSQALLNGEVTSGLYTIYLNGDRTQPLQVFCDMAEDGGGWIVFLRRQNGKEDFYRNWKNYVAGFGDPKDEFWIGLENLHKISSQGQYELRVDLRDRGETAYAVYDKFSVGDAKTRYRLRVDGYSGTAGDSMTYHNGRSFSTFDKDNDSAITNCALSYKGAFWYKNCHRVNLMGRYGDNNHSQGVNWFHWKGHEYSIQFAEMKLRPSSFRNLEGRRKRA</sequence>
<gene>
    <name type="primary">TNC</name>
</gene>
<proteinExistence type="evidence at protein level"/>
<name>TENA_CHICK</name>
<feature type="signal peptide">
    <location>
        <begin position="1"/>
        <end position="22"/>
    </location>
</feature>
<feature type="propeptide" id="PRO_0000007743">
    <location>
        <begin position="23"/>
        <end position="33"/>
    </location>
</feature>
<feature type="chain" id="PRO_0000007744" description="Tenascin">
    <location>
        <begin position="34"/>
        <end position="1808"/>
    </location>
</feature>
<feature type="domain" description="EGF-like 1; incomplete" evidence="4">
    <location>
        <begin position="176"/>
        <end position="188"/>
    </location>
</feature>
<feature type="domain" description="EGF-like 2" evidence="4">
    <location>
        <begin position="188"/>
        <end position="219"/>
    </location>
</feature>
<feature type="domain" description="EGF-like 3" evidence="4">
    <location>
        <begin position="219"/>
        <end position="250"/>
    </location>
</feature>
<feature type="domain" description="EGF-like 4" evidence="4">
    <location>
        <begin position="250"/>
        <end position="281"/>
    </location>
</feature>
<feature type="domain" description="EGF-like 5" evidence="4">
    <location>
        <begin position="281"/>
        <end position="312"/>
    </location>
</feature>
<feature type="domain" description="EGF-like 6" evidence="4">
    <location>
        <begin position="312"/>
        <end position="343"/>
    </location>
</feature>
<feature type="domain" description="EGF-like 7" evidence="4">
    <location>
        <begin position="343"/>
        <end position="374"/>
    </location>
</feature>
<feature type="domain" description="EGF-like 8" evidence="4">
    <location>
        <begin position="374"/>
        <end position="405"/>
    </location>
</feature>
<feature type="domain" description="EGF-like 9" evidence="4">
    <location>
        <begin position="405"/>
        <end position="436"/>
    </location>
</feature>
<feature type="domain" description="EGF-like 10" evidence="4">
    <location>
        <begin position="436"/>
        <end position="467"/>
    </location>
</feature>
<feature type="domain" description="EGF-like 11" evidence="4">
    <location>
        <begin position="467"/>
        <end position="498"/>
    </location>
</feature>
<feature type="domain" description="EGF-like 12" evidence="4">
    <location>
        <begin position="498"/>
        <end position="529"/>
    </location>
</feature>
<feature type="domain" description="EGF-like 13" evidence="4">
    <location>
        <begin position="529"/>
        <end position="560"/>
    </location>
</feature>
<feature type="domain" description="EGF-like 14" evidence="4">
    <location>
        <begin position="560"/>
        <end position="591"/>
    </location>
</feature>
<feature type="domain" description="Fibronectin type-III 1" evidence="5">
    <location>
        <begin position="595"/>
        <end position="685"/>
    </location>
</feature>
<feature type="domain" description="Fibronectin type-III 2" evidence="5">
    <location>
        <begin position="686"/>
        <end position="775"/>
    </location>
</feature>
<feature type="domain" description="Fibronectin type-III 3" evidence="5">
    <location>
        <begin position="776"/>
        <end position="866"/>
    </location>
</feature>
<feature type="domain" description="Fibronectin type-III 4" evidence="5">
    <location>
        <begin position="867"/>
        <end position="957"/>
    </location>
</feature>
<feature type="domain" description="Fibronectin type-III 5" evidence="5">
    <location>
        <begin position="958"/>
        <end position="1046"/>
    </location>
</feature>
<feature type="domain" description="Fibronectin type-III 6" evidence="5">
    <location>
        <begin position="1047"/>
        <end position="1138"/>
    </location>
</feature>
<feature type="domain" description="Fibronectin type-III 7" evidence="5">
    <location>
        <begin position="1139"/>
        <end position="1228"/>
    </location>
</feature>
<feature type="domain" description="Fibronectin type-III 8" evidence="5">
    <location>
        <begin position="1229"/>
        <end position="1318"/>
    </location>
</feature>
<feature type="domain" description="Fibronectin type-III 9" evidence="5">
    <location>
        <begin position="1319"/>
        <end position="1408"/>
    </location>
</feature>
<feature type="domain" description="Fibronectin type-III 10" evidence="5">
    <location>
        <begin position="1409"/>
        <end position="1495"/>
    </location>
</feature>
<feature type="domain" description="Fibronectin type-III 11" evidence="5">
    <location>
        <begin position="1496"/>
        <end position="1584"/>
    </location>
</feature>
<feature type="domain" description="Fibrinogen C-terminal" evidence="6">
    <location>
        <begin position="1582"/>
        <end position="1797"/>
    </location>
</feature>
<feature type="coiled-coil region" evidence="3">
    <location>
        <begin position="118"/>
        <end position="142"/>
    </location>
</feature>
<feature type="glycosylation site" description="N-linked (GlcNAc...) asparagine" evidence="3">
    <location>
        <position position="38"/>
    </location>
</feature>
<feature type="glycosylation site" description="O-linked (Xyl...) (chondroitin sulfate) serine" evidence="2">
    <location>
        <position position="72"/>
    </location>
</feature>
<feature type="glycosylation site" description="N-linked (GlcNAc...) asparagine" evidence="3">
    <location>
        <position position="168"/>
    </location>
</feature>
<feature type="glycosylation site" description="N-linked (GlcNAc...) asparagine" evidence="3">
    <location>
        <position position="186"/>
    </location>
</feature>
<feature type="glycosylation site" description="N-linked (GlcNAc...) asparagine" evidence="3">
    <location>
        <position position="328"/>
    </location>
</feature>
<feature type="glycosylation site" description="N-linked (GlcNAc...) asparagine" evidence="3">
    <location>
        <position position="603"/>
    </location>
</feature>
<feature type="glycosylation site" description="N-linked (GlcNAc...) asparagine" evidence="3">
    <location>
        <position position="643"/>
    </location>
</feature>
<feature type="glycosylation site" description="N-linked (GlcNAc...) asparagine" evidence="3">
    <location>
        <position position="751"/>
    </location>
</feature>
<feature type="glycosylation site" description="N-linked (GlcNAc...) asparagine" evidence="3">
    <location>
        <position position="759"/>
    </location>
</feature>
<feature type="glycosylation site" description="N-linked (GlcNAc...) asparagine" evidence="3">
    <location>
        <position position="1050"/>
    </location>
</feature>
<feature type="glycosylation site" description="N-linked (GlcNAc...) asparagine" evidence="3">
    <location>
        <position position="1090"/>
    </location>
</feature>
<feature type="glycosylation site" description="N-linked (GlcNAc...) asparagine" evidence="3">
    <location>
        <position position="1101"/>
    </location>
</feature>
<feature type="glycosylation site" description="N-linked (GlcNAc...) asparagine" evidence="3">
    <location>
        <position position="1112"/>
    </location>
</feature>
<feature type="glycosylation site" description="N-linked (GlcNAc...) asparagine" evidence="3">
    <location>
        <position position="1153"/>
    </location>
</feature>
<feature type="glycosylation site" description="N-linked (GlcNAc...) asparagine" evidence="3">
    <location>
        <position position="1183"/>
    </location>
</feature>
<feature type="glycosylation site" description="N-linked (GlcNAc...) asparagine" evidence="3">
    <location>
        <position position="1416"/>
    </location>
</feature>
<feature type="glycosylation site" description="N-linked (GlcNAc...) asparagine" evidence="3">
    <location>
        <position position="1736"/>
    </location>
</feature>
<feature type="glycosylation site" description="N-linked (GlcNAc...) asparagine" evidence="3">
    <location>
        <position position="1769"/>
    </location>
</feature>
<feature type="disulfide bond" description="Interchain" evidence="4 6">
    <location>
        <position position="64"/>
    </location>
</feature>
<feature type="disulfide bond" evidence="1">
    <location>
        <begin position="192"/>
        <end position="202"/>
    </location>
</feature>
<feature type="disulfide bond" evidence="1">
    <location>
        <begin position="196"/>
        <end position="207"/>
    </location>
</feature>
<feature type="disulfide bond" evidence="1">
    <location>
        <begin position="209"/>
        <end position="218"/>
    </location>
</feature>
<feature type="disulfide bond" evidence="1">
    <location>
        <begin position="223"/>
        <end position="233"/>
    </location>
</feature>
<feature type="disulfide bond" evidence="1">
    <location>
        <begin position="227"/>
        <end position="238"/>
    </location>
</feature>
<feature type="disulfide bond" evidence="1">
    <location>
        <begin position="240"/>
        <end position="249"/>
    </location>
</feature>
<feature type="disulfide bond" evidence="1">
    <location>
        <begin position="254"/>
        <end position="264"/>
    </location>
</feature>
<feature type="disulfide bond" evidence="1">
    <location>
        <begin position="258"/>
        <end position="269"/>
    </location>
</feature>
<feature type="disulfide bond" evidence="1">
    <location>
        <begin position="271"/>
        <end position="280"/>
    </location>
</feature>
<feature type="disulfide bond" evidence="1">
    <location>
        <begin position="285"/>
        <end position="295"/>
    </location>
</feature>
<feature type="disulfide bond" evidence="1">
    <location>
        <begin position="289"/>
        <end position="300"/>
    </location>
</feature>
<feature type="disulfide bond" evidence="1">
    <location>
        <begin position="302"/>
        <end position="311"/>
    </location>
</feature>
<feature type="disulfide bond" evidence="1">
    <location>
        <begin position="316"/>
        <end position="326"/>
    </location>
</feature>
<feature type="disulfide bond" evidence="1">
    <location>
        <begin position="320"/>
        <end position="331"/>
    </location>
</feature>
<feature type="disulfide bond" evidence="1">
    <location>
        <begin position="333"/>
        <end position="342"/>
    </location>
</feature>
<feature type="disulfide bond" evidence="1">
    <location>
        <begin position="347"/>
        <end position="357"/>
    </location>
</feature>
<feature type="disulfide bond" evidence="1">
    <location>
        <begin position="351"/>
        <end position="362"/>
    </location>
</feature>
<feature type="disulfide bond" evidence="1">
    <location>
        <begin position="364"/>
        <end position="373"/>
    </location>
</feature>
<feature type="disulfide bond" evidence="1">
    <location>
        <begin position="378"/>
        <end position="388"/>
    </location>
</feature>
<feature type="disulfide bond" evidence="1">
    <location>
        <begin position="382"/>
        <end position="393"/>
    </location>
</feature>
<feature type="disulfide bond" evidence="1">
    <location>
        <begin position="395"/>
        <end position="404"/>
    </location>
</feature>
<feature type="disulfide bond" evidence="1">
    <location>
        <begin position="409"/>
        <end position="419"/>
    </location>
</feature>
<feature type="disulfide bond" evidence="1">
    <location>
        <begin position="413"/>
        <end position="424"/>
    </location>
</feature>
<feature type="disulfide bond" evidence="1">
    <location>
        <begin position="426"/>
        <end position="435"/>
    </location>
</feature>
<feature type="disulfide bond" evidence="1">
    <location>
        <begin position="440"/>
        <end position="450"/>
    </location>
</feature>
<feature type="disulfide bond" evidence="1">
    <location>
        <begin position="444"/>
        <end position="455"/>
    </location>
</feature>
<feature type="disulfide bond" evidence="1">
    <location>
        <begin position="457"/>
        <end position="466"/>
    </location>
</feature>
<feature type="disulfide bond" evidence="1">
    <location>
        <begin position="471"/>
        <end position="481"/>
    </location>
</feature>
<feature type="disulfide bond" evidence="1">
    <location>
        <begin position="475"/>
        <end position="486"/>
    </location>
</feature>
<feature type="disulfide bond" evidence="1">
    <location>
        <begin position="488"/>
        <end position="497"/>
    </location>
</feature>
<feature type="disulfide bond" evidence="1">
    <location>
        <begin position="502"/>
        <end position="512"/>
    </location>
</feature>
<feature type="disulfide bond" evidence="1">
    <location>
        <begin position="506"/>
        <end position="517"/>
    </location>
</feature>
<feature type="disulfide bond" evidence="1">
    <location>
        <begin position="519"/>
        <end position="528"/>
    </location>
</feature>
<feature type="disulfide bond" evidence="1">
    <location>
        <begin position="533"/>
        <end position="543"/>
    </location>
</feature>
<feature type="disulfide bond" evidence="1">
    <location>
        <begin position="537"/>
        <end position="548"/>
    </location>
</feature>
<feature type="disulfide bond" evidence="1">
    <location>
        <begin position="550"/>
        <end position="559"/>
    </location>
</feature>
<feature type="disulfide bond" evidence="1">
    <location>
        <begin position="564"/>
        <end position="574"/>
    </location>
</feature>
<feature type="disulfide bond" evidence="1">
    <location>
        <begin position="568"/>
        <end position="579"/>
    </location>
</feature>
<feature type="disulfide bond" evidence="1">
    <location>
        <begin position="581"/>
        <end position="590"/>
    </location>
</feature>
<feature type="splice variant" id="VSP_001411" description="In isoform 3." evidence="10">
    <location>
        <begin position="1043"/>
        <end position="1315"/>
    </location>
</feature>
<feature type="splice variant" id="VSP_001410" description="In isoform 2." evidence="10">
    <location>
        <begin position="1043"/>
        <end position="1224"/>
    </location>
</feature>
<feature type="sequence conflict" description="In Ref. 2; CAA30824." evidence="11" ref="2">
    <original>W</original>
    <variation>R</variation>
    <location>
        <position position="182"/>
    </location>
</feature>
<feature type="sequence conflict" description="In Ref. 3; AAA48748." evidence="11" ref="3">
    <original>SCPNDCNNV</original>
    <variation>PAPMTATTW</variation>
    <location>
        <begin position="563"/>
        <end position="571"/>
    </location>
</feature>
<feature type="sequence conflict" description="In Ref. 3; AAA48748." evidence="11" ref="3">
    <original>E</original>
    <variation>G</variation>
    <location>
        <position position="598"/>
    </location>
</feature>
<feature type="sequence conflict" description="In Ref. 3; AAA48748." evidence="11" ref="3">
    <original>T</original>
    <variation>TEY</variation>
    <location>
        <position position="838"/>
    </location>
</feature>
<feature type="sequence conflict" description="In Ref. 3; AAA48748." evidence="11" ref="3">
    <original>N</original>
    <variation>F</variation>
    <location>
        <position position="886"/>
    </location>
</feature>
<feature type="strand" evidence="12">
    <location>
        <begin position="1233"/>
        <end position="1237"/>
    </location>
</feature>
<feature type="strand" evidence="12">
    <location>
        <begin position="1240"/>
        <end position="1248"/>
    </location>
</feature>
<feature type="strand" evidence="12">
    <location>
        <begin position="1255"/>
        <end position="1262"/>
    </location>
</feature>
<feature type="strand" evidence="12">
    <location>
        <begin position="1268"/>
        <end position="1272"/>
    </location>
</feature>
<feature type="strand" evidence="12">
    <location>
        <begin position="1280"/>
        <end position="1286"/>
    </location>
</feature>
<feature type="strand" evidence="12">
    <location>
        <begin position="1292"/>
        <end position="1303"/>
    </location>
</feature>
<feature type="strand" evidence="12">
    <location>
        <begin position="1309"/>
        <end position="1314"/>
    </location>
</feature>
<feature type="strand" evidence="12">
    <location>
        <begin position="1323"/>
        <end position="1327"/>
    </location>
</feature>
<feature type="strand" evidence="12">
    <location>
        <begin position="1333"/>
        <end position="1337"/>
    </location>
</feature>
<feature type="strand" evidence="12">
    <location>
        <begin position="1345"/>
        <end position="1353"/>
    </location>
</feature>
<feature type="strand" evidence="12">
    <location>
        <begin position="1360"/>
        <end position="1365"/>
    </location>
</feature>
<feature type="strand" evidence="12">
    <location>
        <begin position="1370"/>
        <end position="1373"/>
    </location>
</feature>
<feature type="strand" evidence="12">
    <location>
        <begin position="1381"/>
        <end position="1390"/>
    </location>
</feature>
<feature type="strand" evidence="12">
    <location>
        <begin position="1398"/>
        <end position="1403"/>
    </location>
</feature>
<accession>P10039</accession>
<accession>O73584</accession>
<accession>O73585</accession>
<accession>P13132</accession>
<keyword id="KW-0002">3D-structure</keyword>
<keyword id="KW-0025">Alternative splicing</keyword>
<keyword id="KW-0130">Cell adhesion</keyword>
<keyword id="KW-0165">Cleavage on pair of basic residues</keyword>
<keyword id="KW-0175">Coiled coil</keyword>
<keyword id="KW-0903">Direct protein sequencing</keyword>
<keyword id="KW-1015">Disulfide bond</keyword>
<keyword id="KW-0245">EGF-like domain</keyword>
<keyword id="KW-0272">Extracellular matrix</keyword>
<keyword id="KW-0325">Glycoprotein</keyword>
<keyword id="KW-0654">Proteoglycan</keyword>
<keyword id="KW-1185">Reference proteome</keyword>
<keyword id="KW-0677">Repeat</keyword>
<keyword id="KW-0964">Secreted</keyword>
<keyword id="KW-0732">Signal</keyword>
<organism>
    <name type="scientific">Gallus gallus</name>
    <name type="common">Chicken</name>
    <dbReference type="NCBI Taxonomy" id="9031"/>
    <lineage>
        <taxon>Eukaryota</taxon>
        <taxon>Metazoa</taxon>
        <taxon>Chordata</taxon>
        <taxon>Craniata</taxon>
        <taxon>Vertebrata</taxon>
        <taxon>Euteleostomi</taxon>
        <taxon>Archelosauria</taxon>
        <taxon>Archosauria</taxon>
        <taxon>Dinosauria</taxon>
        <taxon>Saurischia</taxon>
        <taxon>Theropoda</taxon>
        <taxon>Coelurosauria</taxon>
        <taxon>Aves</taxon>
        <taxon>Neognathae</taxon>
        <taxon>Galloanserae</taxon>
        <taxon>Galliformes</taxon>
        <taxon>Phasianidae</taxon>
        <taxon>Phasianinae</taxon>
        <taxon>Gallus</taxon>
    </lineage>
</organism>